<sequence>MAPKRSRRSNRRAGSRAAATSLVYDTCYATLTERATTSFQRQSFPTLKGMGDRAFQVVSFTIQGVSAAPLMYNARLYNPGDTDSVHATGVQLMGTVPRTVRLTPRVGQNNWFFGNTEEAETILAIDGLVSAKGANAPSNTVVVTGCFRLAPSELQSQ</sequence>
<evidence type="ECO:0000305" key="1"/>
<comment type="subcellular location">
    <subcellularLocation>
        <location evidence="1">Virion</location>
    </subcellularLocation>
</comment>
<name>COAT_SSADV</name>
<protein>
    <recommendedName>
        <fullName>Coat protein</fullName>
    </recommendedName>
    <alternativeName>
        <fullName>Capsid protein</fullName>
    </alternativeName>
</protein>
<organismHost>
    <name type="scientific">Panicum virgatum</name>
    <name type="common">Blackwell switchgrass</name>
    <dbReference type="NCBI Taxonomy" id="38727"/>
</organismHost>
<organismHost>
    <name type="scientific">Stenotaphrum secundatum</name>
    <dbReference type="NCBI Taxonomy" id="158163"/>
</organismHost>
<dbReference type="EMBL" id="L10083">
    <property type="protein sequence ID" value="AAA20826.1"/>
    <property type="molecule type" value="Genomic_RNA"/>
</dbReference>
<dbReference type="SMR" id="Q88305"/>
<dbReference type="GO" id="GO:0019028">
    <property type="term" value="C:viral capsid"/>
    <property type="evidence" value="ECO:0007669"/>
    <property type="project" value="UniProtKB-KW"/>
</dbReference>
<dbReference type="GO" id="GO:0005198">
    <property type="term" value="F:structural molecule activity"/>
    <property type="evidence" value="ECO:0007669"/>
    <property type="project" value="InterPro"/>
</dbReference>
<dbReference type="Gene3D" id="2.60.120.220">
    <property type="entry name" value="Satellite virus coat domain"/>
    <property type="match status" value="1"/>
</dbReference>
<dbReference type="InterPro" id="IPR010392">
    <property type="entry name" value="Satellite_virus_coat"/>
</dbReference>
<dbReference type="InterPro" id="IPR037164">
    <property type="entry name" value="Satellite_virus_coat_sf"/>
</dbReference>
<dbReference type="Pfam" id="PF06184">
    <property type="entry name" value="Potex_coat"/>
    <property type="match status" value="1"/>
</dbReference>
<dbReference type="SUPFAM" id="SSF88650">
    <property type="entry name" value="Satellite viruses"/>
    <property type="match status" value="1"/>
</dbReference>
<proteinExistence type="predicted"/>
<keyword id="KW-0167">Capsid protein</keyword>
<keyword id="KW-0946">Virion</keyword>
<accession>Q88305</accession>
<reference key="1">
    <citation type="journal article" date="1994" name="Mol. Plant Microbe Interact.">
        <title>The nucleotide sequence of satellite St. Augustine decline virus.</title>
        <authorList>
            <person name="Berger P.H."/>
            <person name="Shiel P.J."/>
            <person name="Gunasinghe U."/>
        </authorList>
    </citation>
    <scope>NUCLEOTIDE SEQUENCE [GENOMIC RNA]</scope>
</reference>
<feature type="chain" id="PRO_0000222547" description="Coat protein">
    <location>
        <begin position="1"/>
        <end position="157"/>
    </location>
</feature>
<organism>
    <name type="scientific">Satellite St. Augustine decline virus</name>
    <name type="common">SSADV</name>
    <dbReference type="NCBI Taxonomy" id="28265"/>
    <lineage>
        <taxon>Viruses</taxon>
        <taxon>Riboviria</taxon>
        <taxon>Papanivirus</taxon>
        <taxon>Panicum papanivirus 1</taxon>
    </lineage>
</organism>